<comment type="function">
    <text evidence="2">Binds to actin and affects the structure of the cytoskeleton. At high concentrations, profilin prevents the polymerization of actin, whereas it enhances it at low concentrations. By binding to PIP2, it inhibits the formation of IP3 and DG.</text>
</comment>
<comment type="subunit">
    <text evidence="3">Multimer. Occurs in many kinds of cells as a complex with monomeric actin in a 1:1 ratio.</text>
</comment>
<comment type="subcellular location">
    <subcellularLocation>
        <location evidence="2">Cytoplasm</location>
        <location evidence="2">Cytoskeleton</location>
    </subcellularLocation>
</comment>
<comment type="tissue specificity">
    <text>Pollen specific.</text>
</comment>
<comment type="PTM">
    <text evidence="1">Phosphorylated by MAP kinases.</text>
</comment>
<comment type="polymorphism">
    <text>Several isoforms of the allergen exist due to polymorphism.</text>
</comment>
<comment type="allergen">
    <text evidence="3">Causes an allergic reaction in human.</text>
</comment>
<comment type="miscellaneous">
    <text evidence="7">The variability of the residues taking part of IgE-binding epitopes might be responsible of the difference in cross-reactivity among olive pollen cultivars, and between distantly related pollen species, leading to a variable range of allergy reactions among atopic patients.</text>
</comment>
<comment type="similarity">
    <text evidence="5">Belongs to the profilin family.</text>
</comment>
<reference key="1">
    <citation type="journal article" date="1993" name="Plant J.">
        <title>The profilin multigene family of maize: differential expression of three isoforms.</title>
        <authorList>
            <person name="Staiger C.J."/>
            <person name="Goodbody K.C."/>
            <person name="Hussey P.J."/>
            <person name="Valenta R."/>
            <person name="Droebak B.K."/>
            <person name="Lloyd C.W."/>
        </authorList>
    </citation>
    <scope>NUCLEOTIDE SEQUENCE [MRNA]</scope>
    <source>
        <strain>cv. A188</strain>
        <tissue>Pollen</tissue>
    </source>
</reference>
<reference key="2">
    <citation type="journal article" date="2000" name="Plant Cell">
        <title>Maize profilin isoforms are functionally distinct.</title>
        <authorList>
            <person name="Kovar D.R."/>
            <person name="Droebak B.K."/>
            <person name="Staiger C.J."/>
        </authorList>
    </citation>
    <scope>FUNCTION</scope>
    <scope>SUBCELLULAR LOCATION</scope>
    <source>
        <strain>cv. B73</strain>
        <tissue evidence="4">Pollen</tissue>
    </source>
</reference>
<reference key="3">
    <citation type="journal article" date="2000" name="Allergol. Int.">
        <title>Recombinant Zea mays profilin forms multimers with pan-allergenic potential.</title>
        <authorList>
            <person name="Psaradellis T."/>
            <person name="Kao N.L."/>
            <person name="Babich M."/>
        </authorList>
    </citation>
    <scope>ALLERGEN</scope>
    <scope>SUBUNIT</scope>
</reference>
<reference key="4">
    <citation type="journal article" date="2013" name="PLoS ONE">
        <title>Analysis of the effects of polymorphism on pollen profilin structural functionality and the generation of conformational, T- and B-cell epitopes.</title>
        <authorList>
            <person name="Jimenez-Lopez J.C."/>
            <person name="Rodriguez-Garcia M.I."/>
            <person name="Alche J.D."/>
        </authorList>
    </citation>
    <scope>3D-STRUCTURE MODELING</scope>
    <scope>DISULFIDE BOND</scope>
</reference>
<protein>
    <recommendedName>
        <fullName>Profilin-1</fullName>
    </recommendedName>
    <alternativeName>
        <fullName>Pollen allergen Zea m 12</fullName>
    </alternativeName>
    <alternativeName>
        <fullName>ZmPRO1</fullName>
    </alternativeName>
    <allergenName>Zea m 12</allergenName>
</protein>
<keyword id="KW-0009">Actin-binding</keyword>
<keyword id="KW-0020">Allergen</keyword>
<keyword id="KW-0963">Cytoplasm</keyword>
<keyword id="KW-0206">Cytoskeleton</keyword>
<keyword id="KW-1015">Disulfide bond</keyword>
<keyword id="KW-0597">Phosphoprotein</keyword>
<keyword id="KW-1185">Reference proteome</keyword>
<name>PROF1_MAIZE</name>
<dbReference type="EMBL" id="X73279">
    <property type="protein sequence ID" value="CAA51718.1"/>
    <property type="molecule type" value="mRNA"/>
</dbReference>
<dbReference type="PIR" id="S35796">
    <property type="entry name" value="S35796"/>
</dbReference>
<dbReference type="RefSeq" id="NP_001105450.1">
    <property type="nucleotide sequence ID" value="NM_001111980.1"/>
</dbReference>
<dbReference type="SMR" id="P35081"/>
<dbReference type="STRING" id="4577.P35081"/>
<dbReference type="Allergome" id="3530">
    <property type="allergen name" value="Zea m 12.0101"/>
</dbReference>
<dbReference type="Allergome" id="682">
    <property type="allergen name" value="Zea m 12"/>
</dbReference>
<dbReference type="PaxDb" id="4577-GRMZM2G074361_P01"/>
<dbReference type="GeneID" id="542409"/>
<dbReference type="KEGG" id="zma:542409"/>
<dbReference type="MaizeGDB" id="51451"/>
<dbReference type="eggNOG" id="KOG1755">
    <property type="taxonomic scope" value="Eukaryota"/>
</dbReference>
<dbReference type="InParanoid" id="P35081"/>
<dbReference type="OrthoDB" id="421374at2759"/>
<dbReference type="Proteomes" id="UP000007305">
    <property type="component" value="Unplaced"/>
</dbReference>
<dbReference type="ExpressionAtlas" id="P35081">
    <property type="expression patterns" value="baseline and differential"/>
</dbReference>
<dbReference type="GO" id="GO:0005938">
    <property type="term" value="C:cell cortex"/>
    <property type="evidence" value="ECO:0000318"/>
    <property type="project" value="GO_Central"/>
</dbReference>
<dbReference type="GO" id="GO:0005856">
    <property type="term" value="C:cytoskeleton"/>
    <property type="evidence" value="ECO:0000314"/>
    <property type="project" value="UniProtKB"/>
</dbReference>
<dbReference type="GO" id="GO:0003785">
    <property type="term" value="F:actin monomer binding"/>
    <property type="evidence" value="ECO:0000314"/>
    <property type="project" value="AgBase"/>
</dbReference>
<dbReference type="GO" id="GO:0005546">
    <property type="term" value="F:phosphatidylinositol-4,5-bisphosphate binding"/>
    <property type="evidence" value="ECO:0000304"/>
    <property type="project" value="AgBase"/>
</dbReference>
<dbReference type="GO" id="GO:0070064">
    <property type="term" value="F:proline-rich region binding"/>
    <property type="evidence" value="ECO:0000314"/>
    <property type="project" value="AgBase"/>
</dbReference>
<dbReference type="GO" id="GO:0007097">
    <property type="term" value="P:nuclear migration"/>
    <property type="evidence" value="ECO:0000314"/>
    <property type="project" value="AgBase"/>
</dbReference>
<dbReference type="GO" id="GO:0030845">
    <property type="term" value="P:phospholipase C-inhibiting G protein-coupled receptor signaling pathway"/>
    <property type="evidence" value="ECO:0000314"/>
    <property type="project" value="AgBase"/>
</dbReference>
<dbReference type="GO" id="GO:0051259">
    <property type="term" value="P:protein complex oligomerization"/>
    <property type="evidence" value="ECO:0000314"/>
    <property type="project" value="UniProtKB"/>
</dbReference>
<dbReference type="GO" id="GO:0032956">
    <property type="term" value="P:regulation of actin cytoskeleton organization"/>
    <property type="evidence" value="ECO:0000304"/>
    <property type="project" value="AgBase"/>
</dbReference>
<dbReference type="CDD" id="cd00148">
    <property type="entry name" value="PROF"/>
    <property type="match status" value="1"/>
</dbReference>
<dbReference type="FunFam" id="3.30.450.30:FF:000001">
    <property type="entry name" value="Profilin"/>
    <property type="match status" value="1"/>
</dbReference>
<dbReference type="Gene3D" id="3.30.450.30">
    <property type="entry name" value="Dynein light chain 2a, cytoplasmic"/>
    <property type="match status" value="1"/>
</dbReference>
<dbReference type="InterPro" id="IPR048278">
    <property type="entry name" value="PFN"/>
</dbReference>
<dbReference type="InterPro" id="IPR005455">
    <property type="entry name" value="PFN_euk"/>
</dbReference>
<dbReference type="InterPro" id="IPR036140">
    <property type="entry name" value="PFN_sf"/>
</dbReference>
<dbReference type="InterPro" id="IPR027310">
    <property type="entry name" value="Profilin_CS"/>
</dbReference>
<dbReference type="PANTHER" id="PTHR11604">
    <property type="entry name" value="PROFILIN"/>
    <property type="match status" value="1"/>
</dbReference>
<dbReference type="PANTHER" id="PTHR11604:SF67">
    <property type="entry name" value="PROFILIN LP04"/>
    <property type="match status" value="1"/>
</dbReference>
<dbReference type="Pfam" id="PF00235">
    <property type="entry name" value="Profilin"/>
    <property type="match status" value="1"/>
</dbReference>
<dbReference type="PRINTS" id="PR00392">
    <property type="entry name" value="PROFILIN"/>
</dbReference>
<dbReference type="PRINTS" id="PR01640">
    <property type="entry name" value="PROFILINPLNT"/>
</dbReference>
<dbReference type="SMART" id="SM00392">
    <property type="entry name" value="PROF"/>
    <property type="match status" value="1"/>
</dbReference>
<dbReference type="SUPFAM" id="SSF55770">
    <property type="entry name" value="Profilin (actin-binding protein)"/>
    <property type="match status" value="1"/>
</dbReference>
<dbReference type="PROSITE" id="PS00414">
    <property type="entry name" value="PROFILIN"/>
    <property type="match status" value="1"/>
</dbReference>
<accession>P35081</accession>
<feature type="initiator methionine" description="Removed" evidence="1">
    <location>
        <position position="1"/>
    </location>
</feature>
<feature type="chain" id="PRO_0000199646" description="Profilin-1">
    <location>
        <begin position="2"/>
        <end position="131"/>
    </location>
</feature>
<feature type="short sequence motif" description="Involved in PIP2 interaction" evidence="6">
    <location>
        <begin position="81"/>
        <end position="97"/>
    </location>
</feature>
<feature type="modified residue" description="Phosphothreonine" evidence="1">
    <location>
        <position position="111"/>
    </location>
</feature>
<feature type="disulfide bond" evidence="7">
    <location>
        <begin position="13"/>
        <end position="115"/>
    </location>
</feature>
<sequence length="131" mass="14147">MSWQTYVDEHLMCEIEGHHLTSAAIVGHDGATWAQSTAFPEFKPEEMAAIMKDFDEPGHLAPTGLILGGTKYMVIQGEPGAVIRGKKGSGGITVKKTGQSLIIGIYDEPMTPGQCNLVVERLGDYLLEQGM</sequence>
<gene>
    <name type="primary">PRO1</name>
    <name type="synonym">PRF1</name>
</gene>
<organism>
    <name type="scientific">Zea mays</name>
    <name type="common">Maize</name>
    <dbReference type="NCBI Taxonomy" id="4577"/>
    <lineage>
        <taxon>Eukaryota</taxon>
        <taxon>Viridiplantae</taxon>
        <taxon>Streptophyta</taxon>
        <taxon>Embryophyta</taxon>
        <taxon>Tracheophyta</taxon>
        <taxon>Spermatophyta</taxon>
        <taxon>Magnoliopsida</taxon>
        <taxon>Liliopsida</taxon>
        <taxon>Poales</taxon>
        <taxon>Poaceae</taxon>
        <taxon>PACMAD clade</taxon>
        <taxon>Panicoideae</taxon>
        <taxon>Andropogonodae</taxon>
        <taxon>Andropogoneae</taxon>
        <taxon>Tripsacinae</taxon>
        <taxon>Zea</taxon>
    </lineage>
</organism>
<evidence type="ECO:0000250" key="1"/>
<evidence type="ECO:0000269" key="2">
    <source>
    </source>
</evidence>
<evidence type="ECO:0000269" key="3">
    <source ref="3"/>
</evidence>
<evidence type="ECO:0000303" key="4">
    <source>
    </source>
</evidence>
<evidence type="ECO:0000305" key="5"/>
<evidence type="ECO:0000305" key="6">
    <source>
    </source>
</evidence>
<evidence type="ECO:0000305" key="7">
    <source>
    </source>
</evidence>
<proteinExistence type="evidence at protein level"/>